<dbReference type="EMBL" id="CP000026">
    <property type="protein sequence ID" value="AAV76624.1"/>
    <property type="molecule type" value="Genomic_DNA"/>
</dbReference>
<dbReference type="RefSeq" id="WP_000050806.1">
    <property type="nucleotide sequence ID" value="NC_006511.1"/>
</dbReference>
<dbReference type="SMR" id="Q5PE22"/>
<dbReference type="KEGG" id="spt:SPA0624"/>
<dbReference type="HOGENOM" id="CLU_063050_0_1_6"/>
<dbReference type="Proteomes" id="UP000008185">
    <property type="component" value="Chromosome"/>
</dbReference>
<dbReference type="GO" id="GO:0043590">
    <property type="term" value="C:bacterial nucleoid"/>
    <property type="evidence" value="ECO:0007669"/>
    <property type="project" value="TreeGrafter"/>
</dbReference>
<dbReference type="GO" id="GO:0005737">
    <property type="term" value="C:cytoplasm"/>
    <property type="evidence" value="ECO:0007669"/>
    <property type="project" value="UniProtKB-UniRule"/>
</dbReference>
<dbReference type="GO" id="GO:0003690">
    <property type="term" value="F:double-stranded DNA binding"/>
    <property type="evidence" value="ECO:0007669"/>
    <property type="project" value="TreeGrafter"/>
</dbReference>
<dbReference type="GO" id="GO:0003727">
    <property type="term" value="F:single-stranded RNA binding"/>
    <property type="evidence" value="ECO:0007669"/>
    <property type="project" value="TreeGrafter"/>
</dbReference>
<dbReference type="HAMAP" id="MF_00730">
    <property type="entry name" value="NdpA"/>
    <property type="match status" value="1"/>
</dbReference>
<dbReference type="InterPro" id="IPR007358">
    <property type="entry name" value="Nucleoid_associated_NdpA"/>
</dbReference>
<dbReference type="NCBIfam" id="NF001557">
    <property type="entry name" value="PRK00378.1"/>
    <property type="match status" value="1"/>
</dbReference>
<dbReference type="PANTHER" id="PTHR38772">
    <property type="match status" value="1"/>
</dbReference>
<dbReference type="PANTHER" id="PTHR38772:SF1">
    <property type="entry name" value="NUCLEOID-ASSOCIATED PROTEIN YEJK"/>
    <property type="match status" value="1"/>
</dbReference>
<dbReference type="Pfam" id="PF04245">
    <property type="entry name" value="NA37"/>
    <property type="match status" value="1"/>
</dbReference>
<protein>
    <recommendedName>
        <fullName evidence="1">Nucleoid-associated protein YejK</fullName>
    </recommendedName>
</protein>
<gene>
    <name evidence="1" type="primary">yejK</name>
    <name type="ordered locus">SPA0624</name>
</gene>
<name>NDPA_SALPA</name>
<feature type="chain" id="PRO_1000045940" description="Nucleoid-associated protein YejK">
    <location>
        <begin position="1"/>
        <end position="335"/>
    </location>
</feature>
<evidence type="ECO:0000255" key="1">
    <source>
        <dbReference type="HAMAP-Rule" id="MF_00730"/>
    </source>
</evidence>
<organism>
    <name type="scientific">Salmonella paratyphi A (strain ATCC 9150 / SARB42)</name>
    <dbReference type="NCBI Taxonomy" id="295319"/>
    <lineage>
        <taxon>Bacteria</taxon>
        <taxon>Pseudomonadati</taxon>
        <taxon>Pseudomonadota</taxon>
        <taxon>Gammaproteobacteria</taxon>
        <taxon>Enterobacterales</taxon>
        <taxon>Enterobacteriaceae</taxon>
        <taxon>Salmonella</taxon>
    </lineage>
</organism>
<reference key="1">
    <citation type="journal article" date="2004" name="Nat. Genet.">
        <title>Comparison of genome degradation in Paratyphi A and Typhi, human-restricted serovars of Salmonella enterica that cause typhoid.</title>
        <authorList>
            <person name="McClelland M."/>
            <person name="Sanderson K.E."/>
            <person name="Clifton S.W."/>
            <person name="Latreille P."/>
            <person name="Porwollik S."/>
            <person name="Sabo A."/>
            <person name="Meyer R."/>
            <person name="Bieri T."/>
            <person name="Ozersky P."/>
            <person name="McLellan M."/>
            <person name="Harkins C.R."/>
            <person name="Wang C."/>
            <person name="Nguyen C."/>
            <person name="Berghoff A."/>
            <person name="Elliott G."/>
            <person name="Kohlberg S."/>
            <person name="Strong C."/>
            <person name="Du F."/>
            <person name="Carter J."/>
            <person name="Kremizki C."/>
            <person name="Layman D."/>
            <person name="Leonard S."/>
            <person name="Sun H."/>
            <person name="Fulton L."/>
            <person name="Nash W."/>
            <person name="Miner T."/>
            <person name="Minx P."/>
            <person name="Delehaunty K."/>
            <person name="Fronick C."/>
            <person name="Magrini V."/>
            <person name="Nhan M."/>
            <person name="Warren W."/>
            <person name="Florea L."/>
            <person name="Spieth J."/>
            <person name="Wilson R.K."/>
        </authorList>
    </citation>
    <scope>NUCLEOTIDE SEQUENCE [LARGE SCALE GENOMIC DNA]</scope>
    <source>
        <strain>ATCC 9150 / SARB42</strain>
    </source>
</reference>
<accession>Q5PE22</accession>
<keyword id="KW-0963">Cytoplasm</keyword>
<proteinExistence type="inferred from homology"/>
<comment type="subcellular location">
    <subcellularLocation>
        <location evidence="1">Cytoplasm</location>
        <location evidence="1">Nucleoid</location>
    </subcellularLocation>
</comment>
<comment type="similarity">
    <text evidence="1">Belongs to the YejK family.</text>
</comment>
<sequence>MSLDINQIALHQLIKRDEQNLELVLRDSLLEPTTTVVEMVAELHRVYSAKNKAYGLFNEESELAQALRLQRQGEEDFLAFSRAATGRLRDELAKYPFADGGIVLFCHYRYLAVEYLLVTVLNNLSSMRVNENLDINPTHYLDINHADIVARIDLTEWETNPQSTRYLTFLKGRVGRKVADFFMDFLGASEGLNAKAQNRGLLQAVDDFTAEAQLDKAERQNVRQQVYSYCNEQLQAGEEIELESLSKELSGVSEVSFSEFTAEKGYELEESFPADRSTLRQLTKYAGSGGGLTINFDAMLLGERIFWDPATDTLTIKGTPPNLRDQLQRRTSGGK</sequence>